<feature type="chain" id="PRO_1000142390" description="Large ribosomal subunit protein uL5">
    <location>
        <begin position="1"/>
        <end position="179"/>
    </location>
</feature>
<comment type="function">
    <text evidence="1">This is one of the proteins that bind and probably mediate the attachment of the 5S RNA into the large ribosomal subunit, where it forms part of the central protuberance. In the 70S ribosome it contacts protein S13 of the 30S subunit (bridge B1b), connecting the 2 subunits; this bridge is implicated in subunit movement. Contacts the P site tRNA; the 5S rRNA and some of its associated proteins might help stabilize positioning of ribosome-bound tRNAs.</text>
</comment>
<comment type="subunit">
    <text evidence="1">Part of the 50S ribosomal subunit; part of the 5S rRNA/L5/L18/L25 subcomplex. Contacts the 5S rRNA and the P site tRNA. Forms a bridge to the 30S subunit in the 70S ribosome.</text>
</comment>
<comment type="similarity">
    <text evidence="1">Belongs to the universal ribosomal protein uL5 family.</text>
</comment>
<accession>B8DNA8</accession>
<gene>
    <name evidence="1" type="primary">rplE</name>
    <name type="ordered locus">DvMF_0091</name>
</gene>
<organism>
    <name type="scientific">Nitratidesulfovibrio vulgaris (strain DSM 19637 / Miyazaki F)</name>
    <name type="common">Desulfovibrio vulgaris</name>
    <dbReference type="NCBI Taxonomy" id="883"/>
    <lineage>
        <taxon>Bacteria</taxon>
        <taxon>Pseudomonadati</taxon>
        <taxon>Thermodesulfobacteriota</taxon>
        <taxon>Desulfovibrionia</taxon>
        <taxon>Desulfovibrionales</taxon>
        <taxon>Desulfovibrionaceae</taxon>
        <taxon>Nitratidesulfovibrio</taxon>
    </lineage>
</organism>
<proteinExistence type="inferred from homology"/>
<sequence length="179" mass="20271">MTRLEQIYREKVVPVLQKEFNYTSSMQVPGIEKVSLNIGLGAASQNNKLMEEAIKELTAIAGQKAVVTRAKKSIASFKLREGMPIGCRVTLRKERMWDFLDKLMNFALPRVRDFRGIPDRGFDGRGNFTLGIKEHTIFPELEVDRVDNPKGMNITIVTTAQTDKEGKLLLDQLGMPFKK</sequence>
<protein>
    <recommendedName>
        <fullName evidence="1">Large ribosomal subunit protein uL5</fullName>
    </recommendedName>
    <alternativeName>
        <fullName evidence="2">50S ribosomal protein L5</fullName>
    </alternativeName>
</protein>
<name>RL5_NITV9</name>
<dbReference type="EMBL" id="CP001197">
    <property type="protein sequence ID" value="ACL07052.1"/>
    <property type="molecule type" value="Genomic_DNA"/>
</dbReference>
<dbReference type="SMR" id="B8DNA8"/>
<dbReference type="STRING" id="883.DvMF_0091"/>
<dbReference type="KEGG" id="dvm:DvMF_0091"/>
<dbReference type="eggNOG" id="COG0094">
    <property type="taxonomic scope" value="Bacteria"/>
</dbReference>
<dbReference type="HOGENOM" id="CLU_061015_2_1_7"/>
<dbReference type="OrthoDB" id="9806626at2"/>
<dbReference type="GO" id="GO:1990904">
    <property type="term" value="C:ribonucleoprotein complex"/>
    <property type="evidence" value="ECO:0007669"/>
    <property type="project" value="UniProtKB-KW"/>
</dbReference>
<dbReference type="GO" id="GO:0005840">
    <property type="term" value="C:ribosome"/>
    <property type="evidence" value="ECO:0007669"/>
    <property type="project" value="UniProtKB-KW"/>
</dbReference>
<dbReference type="GO" id="GO:0019843">
    <property type="term" value="F:rRNA binding"/>
    <property type="evidence" value="ECO:0007669"/>
    <property type="project" value="UniProtKB-UniRule"/>
</dbReference>
<dbReference type="GO" id="GO:0003735">
    <property type="term" value="F:structural constituent of ribosome"/>
    <property type="evidence" value="ECO:0007669"/>
    <property type="project" value="InterPro"/>
</dbReference>
<dbReference type="GO" id="GO:0000049">
    <property type="term" value="F:tRNA binding"/>
    <property type="evidence" value="ECO:0007669"/>
    <property type="project" value="UniProtKB-UniRule"/>
</dbReference>
<dbReference type="GO" id="GO:0006412">
    <property type="term" value="P:translation"/>
    <property type="evidence" value="ECO:0007669"/>
    <property type="project" value="UniProtKB-UniRule"/>
</dbReference>
<dbReference type="FunFam" id="3.30.1440.10:FF:000001">
    <property type="entry name" value="50S ribosomal protein L5"/>
    <property type="match status" value="1"/>
</dbReference>
<dbReference type="Gene3D" id="3.30.1440.10">
    <property type="match status" value="1"/>
</dbReference>
<dbReference type="HAMAP" id="MF_01333_B">
    <property type="entry name" value="Ribosomal_uL5_B"/>
    <property type="match status" value="1"/>
</dbReference>
<dbReference type="InterPro" id="IPR002132">
    <property type="entry name" value="Ribosomal_uL5"/>
</dbReference>
<dbReference type="InterPro" id="IPR020930">
    <property type="entry name" value="Ribosomal_uL5_bac-type"/>
</dbReference>
<dbReference type="InterPro" id="IPR031309">
    <property type="entry name" value="Ribosomal_uL5_C"/>
</dbReference>
<dbReference type="InterPro" id="IPR020929">
    <property type="entry name" value="Ribosomal_uL5_CS"/>
</dbReference>
<dbReference type="InterPro" id="IPR022803">
    <property type="entry name" value="Ribosomal_uL5_dom_sf"/>
</dbReference>
<dbReference type="InterPro" id="IPR031310">
    <property type="entry name" value="Ribosomal_uL5_N"/>
</dbReference>
<dbReference type="NCBIfam" id="NF000585">
    <property type="entry name" value="PRK00010.1"/>
    <property type="match status" value="1"/>
</dbReference>
<dbReference type="PANTHER" id="PTHR11994">
    <property type="entry name" value="60S RIBOSOMAL PROTEIN L11-RELATED"/>
    <property type="match status" value="1"/>
</dbReference>
<dbReference type="Pfam" id="PF00281">
    <property type="entry name" value="Ribosomal_L5"/>
    <property type="match status" value="1"/>
</dbReference>
<dbReference type="Pfam" id="PF00673">
    <property type="entry name" value="Ribosomal_L5_C"/>
    <property type="match status" value="1"/>
</dbReference>
<dbReference type="PIRSF" id="PIRSF002161">
    <property type="entry name" value="Ribosomal_L5"/>
    <property type="match status" value="1"/>
</dbReference>
<dbReference type="SUPFAM" id="SSF55282">
    <property type="entry name" value="RL5-like"/>
    <property type="match status" value="1"/>
</dbReference>
<dbReference type="PROSITE" id="PS00358">
    <property type="entry name" value="RIBOSOMAL_L5"/>
    <property type="match status" value="1"/>
</dbReference>
<reference key="1">
    <citation type="submission" date="2008-10" db="EMBL/GenBank/DDBJ databases">
        <title>Complete sequence of Desulfovibrio vulgaris str. 'Miyazaki F'.</title>
        <authorList>
            <person name="Lucas S."/>
            <person name="Copeland A."/>
            <person name="Lapidus A."/>
            <person name="Glavina del Rio T."/>
            <person name="Dalin E."/>
            <person name="Tice H."/>
            <person name="Bruce D."/>
            <person name="Goodwin L."/>
            <person name="Pitluck S."/>
            <person name="Sims D."/>
            <person name="Brettin T."/>
            <person name="Detter J.C."/>
            <person name="Han C."/>
            <person name="Larimer F."/>
            <person name="Land M."/>
            <person name="Hauser L."/>
            <person name="Kyrpides N."/>
            <person name="Mikhailova N."/>
            <person name="Hazen T.C."/>
            <person name="Richardson P."/>
        </authorList>
    </citation>
    <scope>NUCLEOTIDE SEQUENCE [LARGE SCALE GENOMIC DNA]</scope>
    <source>
        <strain>DSM 19637 / Miyazaki F</strain>
    </source>
</reference>
<keyword id="KW-0687">Ribonucleoprotein</keyword>
<keyword id="KW-0689">Ribosomal protein</keyword>
<keyword id="KW-0694">RNA-binding</keyword>
<keyword id="KW-0699">rRNA-binding</keyword>
<keyword id="KW-0820">tRNA-binding</keyword>
<evidence type="ECO:0000255" key="1">
    <source>
        <dbReference type="HAMAP-Rule" id="MF_01333"/>
    </source>
</evidence>
<evidence type="ECO:0000305" key="2"/>